<keyword id="KW-0167">Capsid protein</keyword>
<keyword id="KW-0903">Direct protein sequencing</keyword>
<keyword id="KW-0945">Host-virus interaction</keyword>
<keyword id="KW-1185">Reference proteome</keyword>
<keyword id="KW-1171">Viral genome ejection through host cell envelope</keyword>
<keyword id="KW-1162">Viral penetration into host cytoplasm</keyword>
<keyword id="KW-0946">Virion</keyword>
<keyword id="KW-1160">Virus entry into host cell</keyword>
<accession>P19193</accession>
<accession>P19184</accession>
<accession>P19185</accession>
<gene>
    <name type="ORF">ORF2</name>
</gene>
<name>H_BPCHP</name>
<comment type="function">
    <text evidence="1">Probably triggers with protein G the injection of the phage DNA into the host upon conformational changes induced by virus-host receptor interaction.</text>
</comment>
<comment type="subcellular location">
    <subcellularLocation>
        <location evidence="2">Virion</location>
    </subcellularLocation>
</comment>
<comment type="similarity">
    <text evidence="2">Belongs to the microviridae H protein family.</text>
</comment>
<comment type="sequence caution" evidence="2">
    <conflict type="erroneous initiation">
        <sequence resource="EMBL-CDS" id="BAA00506"/>
    </conflict>
</comment>
<comment type="sequence caution" evidence="2">
    <conflict type="erroneous initiation">
        <sequence resource="EMBL-CDS" id="BAA00507"/>
    </conflict>
</comment>
<proteinExistence type="evidence at protein level"/>
<feature type="initiator methionine" description="Removed; by host">
    <location>
        <position position="1"/>
    </location>
</feature>
<feature type="chain" id="PRO_0000065883" description="Minor spike protein H">
    <location>
        <begin position="2"/>
        <end position="263"/>
    </location>
</feature>
<sequence>MSFAENVGRFIGNSVNSVGSVIGDGLKGFNSTQSISSAKQANLLNNLPLPSLDNVLNIGMFGGLASGLLSYRAAKKQNKVMQDIANRQMAFQERMSSTAVRRHVEDLKKAGLNPLLALGGSASTPQGAFYSPVNPMESGLNSAISVADKVFDYQRLAHADFQGRLNSAMSVVQLASAVQDYKRNYGKFGEVAYWFDRYAGKLLPAMLFYLFRKHPVGRAVSAANSGYAVAKGAKGVNFKFSNMSSTAVQRHNSRYNVSKGWRR</sequence>
<dbReference type="EMBL" id="D00624">
    <property type="protein sequence ID" value="BAA00505.1"/>
    <property type="molecule type" value="Genomic_DNA"/>
</dbReference>
<dbReference type="EMBL" id="D00624">
    <property type="protein sequence ID" value="BAA00506.1"/>
    <property type="status" value="ALT_INIT"/>
    <property type="molecule type" value="Genomic_DNA"/>
</dbReference>
<dbReference type="EMBL" id="D00624">
    <property type="protein sequence ID" value="BAA00507.1"/>
    <property type="status" value="ALT_INIT"/>
    <property type="molecule type" value="Genomic_DNA"/>
</dbReference>
<dbReference type="KEGG" id="vg:1261203"/>
<dbReference type="KEGG" id="vg:1261204"/>
<dbReference type="KEGG" id="vg:1261205"/>
<dbReference type="OrthoDB" id="11272at10239"/>
<dbReference type="Proteomes" id="UP000002125">
    <property type="component" value="Genome"/>
</dbReference>
<dbReference type="GO" id="GO:0019028">
    <property type="term" value="C:viral capsid"/>
    <property type="evidence" value="ECO:0007669"/>
    <property type="project" value="UniProtKB-KW"/>
</dbReference>
<dbReference type="GO" id="GO:0046718">
    <property type="term" value="P:symbiont entry into host cell"/>
    <property type="evidence" value="ECO:0007669"/>
    <property type="project" value="UniProtKB-KW"/>
</dbReference>
<evidence type="ECO:0000250" key="1"/>
<evidence type="ECO:0000305" key="2"/>
<organism>
    <name type="scientific">Chlamydia phage 1</name>
    <name type="common">Bacteriophage Chp1</name>
    <dbReference type="NCBI Taxonomy" id="2003327"/>
    <lineage>
        <taxon>Viruses</taxon>
        <taxon>Monodnaviria</taxon>
        <taxon>Sangervirae</taxon>
        <taxon>Phixviricota</taxon>
        <taxon>Malgrandaviricetes</taxon>
        <taxon>Petitvirales</taxon>
        <taxon>Microviridae</taxon>
        <taxon>Gokushovirinae</taxon>
        <taxon>Chlamydiamicrovirus</taxon>
    </lineage>
</organism>
<reference key="1">
    <citation type="journal article" date="1989" name="J. Gen. Virol.">
        <title>Analysis of the complete nucleotide sequence of Chp1, a phage which infects avian Chlamydia psittaci.</title>
        <authorList>
            <person name="Storey C.C."/>
            <person name="Lusher M."/>
            <person name="Richmond S.J."/>
        </authorList>
    </citation>
    <scope>NUCLEOTIDE SEQUENCE [GENOMIC DNA]</scope>
    <scope>PARTIAL PROTEIN SEQUENCE</scope>
</reference>
<organismHost>
    <name type="scientific">Chlamydia psittaci</name>
    <name type="common">Chlamydophila psittaci</name>
    <dbReference type="NCBI Taxonomy" id="83554"/>
</organismHost>
<protein>
    <recommendedName>
        <fullName>Minor spike protein H</fullName>
    </recommendedName>
    <alternativeName>
        <fullName>H protein</fullName>
    </alternativeName>
    <alternativeName>
        <fullName>Pilot protein</fullName>
    </alternativeName>
    <alternativeName>
        <fullName>Protein VP2</fullName>
        <shortName>VP2</shortName>
    </alternativeName>
</protein>